<dbReference type="EMBL" id="CU329671">
    <property type="protein sequence ID" value="CAA19291.1"/>
    <property type="molecule type" value="Genomic_DNA"/>
</dbReference>
<dbReference type="PIR" id="T40483">
    <property type="entry name" value="T40483"/>
</dbReference>
<dbReference type="RefSeq" id="NP_596428.1">
    <property type="nucleotide sequence ID" value="NM_001022347.2"/>
</dbReference>
<dbReference type="SMR" id="O74972"/>
<dbReference type="ComplexPortal" id="CPX-10315">
    <property type="entry name" value="37S mitochondrial small ribosomal subunit"/>
</dbReference>
<dbReference type="FunCoup" id="O74972">
    <property type="interactions" value="193"/>
</dbReference>
<dbReference type="STRING" id="284812.O74972"/>
<dbReference type="PaxDb" id="4896-SPBC4B4.11.1"/>
<dbReference type="EnsemblFungi" id="SPBC4B4.11.1">
    <property type="protein sequence ID" value="SPBC4B4.11.1:pep"/>
    <property type="gene ID" value="SPBC4B4.11"/>
</dbReference>
<dbReference type="GeneID" id="2540876"/>
<dbReference type="KEGG" id="spo:2540876"/>
<dbReference type="PomBase" id="SPBC4B4.11">
    <property type="gene designation" value="fyv4"/>
</dbReference>
<dbReference type="VEuPathDB" id="FungiDB:SPBC4B4.11"/>
<dbReference type="HOGENOM" id="CLU_171280_0_0_1"/>
<dbReference type="InParanoid" id="O74972"/>
<dbReference type="OMA" id="AGKFETW"/>
<dbReference type="PhylomeDB" id="O74972"/>
<dbReference type="PRO" id="PR:O74972"/>
<dbReference type="Proteomes" id="UP000002485">
    <property type="component" value="Chromosome II"/>
</dbReference>
<dbReference type="GO" id="GO:0005763">
    <property type="term" value="C:mitochondrial small ribosomal subunit"/>
    <property type="evidence" value="ECO:0000266"/>
    <property type="project" value="PomBase"/>
</dbReference>
<dbReference type="GO" id="GO:0005739">
    <property type="term" value="C:mitochondrion"/>
    <property type="evidence" value="ECO:0007005"/>
    <property type="project" value="PomBase"/>
</dbReference>
<dbReference type="GO" id="GO:0032543">
    <property type="term" value="P:mitochondrial translation"/>
    <property type="evidence" value="ECO:0000266"/>
    <property type="project" value="PomBase"/>
</dbReference>
<dbReference type="InterPro" id="IPR039603">
    <property type="entry name" value="Ribosomal_mS41"/>
</dbReference>
<dbReference type="InterPro" id="IPR019083">
    <property type="entry name" value="SAM_Ribosomal_mS41"/>
</dbReference>
<dbReference type="PANTHER" id="PTHR28235">
    <property type="entry name" value="PROTEIN FYV4, MITOCHONDRIAL"/>
    <property type="match status" value="1"/>
</dbReference>
<dbReference type="PANTHER" id="PTHR28235:SF1">
    <property type="entry name" value="SMALL RIBOSOMAL SUBUNIT PROTEIN MS41"/>
    <property type="match status" value="1"/>
</dbReference>
<dbReference type="Pfam" id="PF09597">
    <property type="entry name" value="SAM_Ribosomal_mS41"/>
    <property type="match status" value="1"/>
</dbReference>
<dbReference type="SMART" id="SM01238">
    <property type="entry name" value="IGR"/>
    <property type="match status" value="1"/>
</dbReference>
<protein>
    <recommendedName>
        <fullName evidence="4">Small ribosomal subunit protein mS41</fullName>
    </recommendedName>
    <alternativeName>
        <fullName>Protein fyv4, mitochondrial</fullName>
    </alternativeName>
</protein>
<evidence type="ECO:0000250" key="1">
    <source>
        <dbReference type="UniProtKB" id="P38783"/>
    </source>
</evidence>
<evidence type="ECO:0000255" key="2"/>
<evidence type="ECO:0000269" key="3">
    <source>
    </source>
</evidence>
<evidence type="ECO:0000305" key="4"/>
<keyword id="KW-0496">Mitochondrion</keyword>
<keyword id="KW-1185">Reference proteome</keyword>
<keyword id="KW-0687">Ribonucleoprotein</keyword>
<keyword id="KW-0689">Ribosomal protein</keyword>
<keyword id="KW-0809">Transit peptide</keyword>
<feature type="transit peptide" description="Mitochondrion" evidence="2">
    <location>
        <begin position="1"/>
        <end position="22"/>
    </location>
</feature>
<feature type="chain" id="PRO_0000292474" description="Small ribosomal subunit protein mS41">
    <location>
        <begin position="23"/>
        <end position="113"/>
    </location>
</feature>
<gene>
    <name type="primary">fyv4</name>
    <name type="ORF">SPBC4B4.11</name>
</gene>
<name>FYV4_SCHPO</name>
<reference key="1">
    <citation type="journal article" date="2002" name="Nature">
        <title>The genome sequence of Schizosaccharomyces pombe.</title>
        <authorList>
            <person name="Wood V."/>
            <person name="Gwilliam R."/>
            <person name="Rajandream M.A."/>
            <person name="Lyne M.H."/>
            <person name="Lyne R."/>
            <person name="Stewart A."/>
            <person name="Sgouros J.G."/>
            <person name="Peat N."/>
            <person name="Hayles J."/>
            <person name="Baker S.G."/>
            <person name="Basham D."/>
            <person name="Bowman S."/>
            <person name="Brooks K."/>
            <person name="Brown D."/>
            <person name="Brown S."/>
            <person name="Chillingworth T."/>
            <person name="Churcher C.M."/>
            <person name="Collins M."/>
            <person name="Connor R."/>
            <person name="Cronin A."/>
            <person name="Davis P."/>
            <person name="Feltwell T."/>
            <person name="Fraser A."/>
            <person name="Gentles S."/>
            <person name="Goble A."/>
            <person name="Hamlin N."/>
            <person name="Harris D.E."/>
            <person name="Hidalgo J."/>
            <person name="Hodgson G."/>
            <person name="Holroyd S."/>
            <person name="Hornsby T."/>
            <person name="Howarth S."/>
            <person name="Huckle E.J."/>
            <person name="Hunt S."/>
            <person name="Jagels K."/>
            <person name="James K.D."/>
            <person name="Jones L."/>
            <person name="Jones M."/>
            <person name="Leather S."/>
            <person name="McDonald S."/>
            <person name="McLean J."/>
            <person name="Mooney P."/>
            <person name="Moule S."/>
            <person name="Mungall K.L."/>
            <person name="Murphy L.D."/>
            <person name="Niblett D."/>
            <person name="Odell C."/>
            <person name="Oliver K."/>
            <person name="O'Neil S."/>
            <person name="Pearson D."/>
            <person name="Quail M.A."/>
            <person name="Rabbinowitsch E."/>
            <person name="Rutherford K.M."/>
            <person name="Rutter S."/>
            <person name="Saunders D."/>
            <person name="Seeger K."/>
            <person name="Sharp S."/>
            <person name="Skelton J."/>
            <person name="Simmonds M.N."/>
            <person name="Squares R."/>
            <person name="Squares S."/>
            <person name="Stevens K."/>
            <person name="Taylor K."/>
            <person name="Taylor R.G."/>
            <person name="Tivey A."/>
            <person name="Walsh S.V."/>
            <person name="Warren T."/>
            <person name="Whitehead S."/>
            <person name="Woodward J.R."/>
            <person name="Volckaert G."/>
            <person name="Aert R."/>
            <person name="Robben J."/>
            <person name="Grymonprez B."/>
            <person name="Weltjens I."/>
            <person name="Vanstreels E."/>
            <person name="Rieger M."/>
            <person name="Schaefer M."/>
            <person name="Mueller-Auer S."/>
            <person name="Gabel C."/>
            <person name="Fuchs M."/>
            <person name="Duesterhoeft A."/>
            <person name="Fritzc C."/>
            <person name="Holzer E."/>
            <person name="Moestl D."/>
            <person name="Hilbert H."/>
            <person name="Borzym K."/>
            <person name="Langer I."/>
            <person name="Beck A."/>
            <person name="Lehrach H."/>
            <person name="Reinhardt R."/>
            <person name="Pohl T.M."/>
            <person name="Eger P."/>
            <person name="Zimmermann W."/>
            <person name="Wedler H."/>
            <person name="Wambutt R."/>
            <person name="Purnelle B."/>
            <person name="Goffeau A."/>
            <person name="Cadieu E."/>
            <person name="Dreano S."/>
            <person name="Gloux S."/>
            <person name="Lelaure V."/>
            <person name="Mottier S."/>
            <person name="Galibert F."/>
            <person name="Aves S.J."/>
            <person name="Xiang Z."/>
            <person name="Hunt C."/>
            <person name="Moore K."/>
            <person name="Hurst S.M."/>
            <person name="Lucas M."/>
            <person name="Rochet M."/>
            <person name="Gaillardin C."/>
            <person name="Tallada V.A."/>
            <person name="Garzon A."/>
            <person name="Thode G."/>
            <person name="Daga R.R."/>
            <person name="Cruzado L."/>
            <person name="Jimenez J."/>
            <person name="Sanchez M."/>
            <person name="del Rey F."/>
            <person name="Benito J."/>
            <person name="Dominguez A."/>
            <person name="Revuelta J.L."/>
            <person name="Moreno S."/>
            <person name="Armstrong J."/>
            <person name="Forsburg S.L."/>
            <person name="Cerutti L."/>
            <person name="Lowe T."/>
            <person name="McCombie W.R."/>
            <person name="Paulsen I."/>
            <person name="Potashkin J."/>
            <person name="Shpakovski G.V."/>
            <person name="Ussery D."/>
            <person name="Barrell B.G."/>
            <person name="Nurse P."/>
        </authorList>
    </citation>
    <scope>NUCLEOTIDE SEQUENCE [LARGE SCALE GENOMIC DNA]</scope>
    <source>
        <strain>972 / ATCC 24843</strain>
    </source>
</reference>
<reference key="2">
    <citation type="journal article" date="2006" name="Nat. Biotechnol.">
        <title>ORFeome cloning and global analysis of protein localization in the fission yeast Schizosaccharomyces pombe.</title>
        <authorList>
            <person name="Matsuyama A."/>
            <person name="Arai R."/>
            <person name="Yashiroda Y."/>
            <person name="Shirai A."/>
            <person name="Kamata A."/>
            <person name="Sekido S."/>
            <person name="Kobayashi Y."/>
            <person name="Hashimoto A."/>
            <person name="Hamamoto M."/>
            <person name="Hiraoka Y."/>
            <person name="Horinouchi S."/>
            <person name="Yoshida M."/>
        </authorList>
    </citation>
    <scope>SUBCELLULAR LOCATION [LARGE SCALE ANALYSIS]</scope>
</reference>
<accession>O74972</accession>
<comment type="function">
    <text evidence="1">Component of the mitochondrial ribosome (mitoribosome), a dedicated translation machinery responsible for the synthesis of mitochondrial genome-encoded proteins, including at least some of the essential transmembrane subunits of the mitochondrial respiratory chain. The mitoribosomes are attached to the mitochondrial inner membrane and translation products are cotranslationally integrated into the membrane. mS41 is involved in telomere length regulation.</text>
</comment>
<comment type="subunit">
    <text evidence="1">Component of the mitochondrial small ribosomal subunit (mt-SSU). Mature yeast 74S mitochondrial ribosomes consist of a small (37S) and a large (54S) subunit. The 37S small subunit contains a 15S ribosomal RNA (15S mt-rRNA) and at least 32 different proteins. The 54S large subunit contains a 21S rRNA (21S mt-rRNA) and at least 45 different proteins.</text>
</comment>
<comment type="subcellular location">
    <subcellularLocation>
        <location evidence="3">Mitochondrion</location>
    </subcellularLocation>
</comment>
<comment type="similarity">
    <text evidence="4">Belongs to the mitochondrion-specific ribosomal protein mS41 family.</text>
</comment>
<organism>
    <name type="scientific">Schizosaccharomyces pombe (strain 972 / ATCC 24843)</name>
    <name type="common">Fission yeast</name>
    <dbReference type="NCBI Taxonomy" id="284812"/>
    <lineage>
        <taxon>Eukaryota</taxon>
        <taxon>Fungi</taxon>
        <taxon>Dikarya</taxon>
        <taxon>Ascomycota</taxon>
        <taxon>Taphrinomycotina</taxon>
        <taxon>Schizosaccharomycetes</taxon>
        <taxon>Schizosaccharomycetales</taxon>
        <taxon>Schizosaccharomycetaceae</taxon>
        <taxon>Schizosaccharomyces</taxon>
    </lineage>
</organism>
<sequence length="113" mass="13329">MLILKRIFIIRNFIFPFSNCRYASTVPSPRSGISNTNDFFKRIGRDTAEKVNGKFESWDGLFRKSTKTMKKEGIDVRTRKYIASQRNRFKEGFIVKPYPVMVKKNGGERRKRK</sequence>
<proteinExistence type="inferred from homology"/>